<organism>
    <name type="scientific">Synechocystis sp. (strain ATCC 27184 / PCC 6803 / Kazusa)</name>
    <dbReference type="NCBI Taxonomy" id="1111708"/>
    <lineage>
        <taxon>Bacteria</taxon>
        <taxon>Bacillati</taxon>
        <taxon>Cyanobacteriota</taxon>
        <taxon>Cyanophyceae</taxon>
        <taxon>Synechococcales</taxon>
        <taxon>Merismopediaceae</taxon>
        <taxon>Synechocystis</taxon>
    </lineage>
</organism>
<name>RPOB_SYNY3</name>
<feature type="chain" id="PRO_0000047982" description="DNA-directed RNA polymerase subunit beta">
    <location>
        <begin position="1"/>
        <end position="1102"/>
    </location>
</feature>
<feature type="region of interest" description="Disordered" evidence="2">
    <location>
        <begin position="1076"/>
        <end position="1102"/>
    </location>
</feature>
<feature type="helix" evidence="4">
    <location>
        <begin position="14"/>
        <end position="25"/>
    </location>
</feature>
<feature type="helix" evidence="4">
    <location>
        <begin position="27"/>
        <end position="35"/>
    </location>
</feature>
<feature type="strand" evidence="4">
    <location>
        <begin position="41"/>
        <end position="43"/>
    </location>
</feature>
<feature type="strand" evidence="4">
    <location>
        <begin position="45"/>
        <end position="49"/>
    </location>
</feature>
<feature type="helix" evidence="3">
    <location>
        <begin position="51"/>
        <end position="53"/>
    </location>
</feature>
<feature type="helix" evidence="4">
    <location>
        <begin position="63"/>
        <end position="67"/>
    </location>
</feature>
<feature type="turn" evidence="4">
    <location>
        <begin position="68"/>
        <end position="70"/>
    </location>
</feature>
<feature type="strand" evidence="4">
    <location>
        <begin position="74"/>
        <end position="88"/>
    </location>
</feature>
<feature type="strand" evidence="4">
    <location>
        <begin position="92"/>
        <end position="102"/>
    </location>
</feature>
<feature type="strand" evidence="4">
    <location>
        <begin position="110"/>
        <end position="119"/>
    </location>
</feature>
<feature type="strand" evidence="4">
    <location>
        <begin position="121"/>
        <end position="125"/>
    </location>
</feature>
<feature type="strand" evidence="4">
    <location>
        <begin position="127"/>
        <end position="134"/>
    </location>
</feature>
<feature type="strand" evidence="3">
    <location>
        <begin position="136"/>
        <end position="139"/>
    </location>
</feature>
<feature type="strand" evidence="4">
    <location>
        <begin position="142"/>
        <end position="148"/>
    </location>
</feature>
<feature type="strand" evidence="4">
    <location>
        <begin position="150"/>
        <end position="152"/>
    </location>
</feature>
<feature type="strand" evidence="4">
    <location>
        <begin position="155"/>
        <end position="159"/>
    </location>
</feature>
<feature type="turn" evidence="3">
    <location>
        <begin position="161"/>
        <end position="163"/>
    </location>
</feature>
<feature type="strand" evidence="4">
    <location>
        <begin position="165"/>
        <end position="169"/>
    </location>
</feature>
<feature type="helix" evidence="4">
    <location>
        <begin position="177"/>
        <end position="184"/>
    </location>
</feature>
<feature type="helix" evidence="4">
    <location>
        <begin position="188"/>
        <end position="194"/>
    </location>
</feature>
<feature type="helix" evidence="4">
    <location>
        <begin position="198"/>
        <end position="208"/>
    </location>
</feature>
<feature type="helix" evidence="4">
    <location>
        <begin position="213"/>
        <end position="224"/>
    </location>
</feature>
<feature type="helix" evidence="4">
    <location>
        <begin position="232"/>
        <end position="242"/>
    </location>
</feature>
<feature type="turn" evidence="4">
    <location>
        <begin position="246"/>
        <end position="248"/>
    </location>
</feature>
<feature type="helix" evidence="4">
    <location>
        <begin position="253"/>
        <end position="263"/>
    </location>
</feature>
<feature type="helix" evidence="4">
    <location>
        <begin position="276"/>
        <end position="288"/>
    </location>
</feature>
<feature type="helix" evidence="4">
    <location>
        <begin position="289"/>
        <end position="291"/>
    </location>
</feature>
<feature type="strand" evidence="4">
    <location>
        <begin position="304"/>
        <end position="308"/>
    </location>
</feature>
<feature type="helix" evidence="4">
    <location>
        <begin position="310"/>
        <end position="335"/>
    </location>
</feature>
<feature type="helix" evidence="4">
    <location>
        <begin position="343"/>
        <end position="346"/>
    </location>
</feature>
<feature type="helix" evidence="4">
    <location>
        <begin position="350"/>
        <end position="361"/>
    </location>
</feature>
<feature type="strand" evidence="4">
    <location>
        <begin position="364"/>
        <end position="368"/>
    </location>
</feature>
<feature type="helix" evidence="4">
    <location>
        <begin position="374"/>
        <end position="380"/>
    </location>
</feature>
<feature type="strand" evidence="4">
    <location>
        <begin position="383"/>
        <end position="385"/>
    </location>
</feature>
<feature type="turn" evidence="3">
    <location>
        <begin position="394"/>
        <end position="396"/>
    </location>
</feature>
<feature type="turn" evidence="4">
    <location>
        <begin position="400"/>
        <end position="402"/>
    </location>
</feature>
<feature type="helix" evidence="4">
    <location>
        <begin position="406"/>
        <end position="408"/>
    </location>
</feature>
<feature type="turn" evidence="4">
    <location>
        <begin position="409"/>
        <end position="411"/>
    </location>
</feature>
<feature type="strand" evidence="4">
    <location>
        <begin position="419"/>
        <end position="421"/>
    </location>
</feature>
<feature type="turn" evidence="4">
    <location>
        <begin position="423"/>
        <end position="425"/>
    </location>
</feature>
<feature type="strand" evidence="4">
    <location>
        <begin position="426"/>
        <end position="429"/>
    </location>
</feature>
<feature type="strand" evidence="4">
    <location>
        <begin position="441"/>
        <end position="443"/>
    </location>
</feature>
<feature type="strand" evidence="4">
    <location>
        <begin position="445"/>
        <end position="449"/>
    </location>
</feature>
<feature type="strand" evidence="4">
    <location>
        <begin position="462"/>
        <end position="464"/>
    </location>
</feature>
<feature type="strand" evidence="4">
    <location>
        <begin position="466"/>
        <end position="469"/>
    </location>
</feature>
<feature type="strand" evidence="4">
    <location>
        <begin position="483"/>
        <end position="485"/>
    </location>
</feature>
<feature type="strand" evidence="4">
    <location>
        <begin position="490"/>
        <end position="494"/>
    </location>
</feature>
<feature type="strand" evidence="4">
    <location>
        <begin position="497"/>
        <end position="501"/>
    </location>
</feature>
<feature type="helix" evidence="4">
    <location>
        <begin position="503"/>
        <end position="505"/>
    </location>
</feature>
<feature type="strand" evidence="4">
    <location>
        <begin position="508"/>
        <end position="511"/>
    </location>
</feature>
<feature type="turn" evidence="4">
    <location>
        <begin position="513"/>
        <end position="516"/>
    </location>
</feature>
<feature type="helix" evidence="4">
    <location>
        <begin position="519"/>
        <end position="522"/>
    </location>
</feature>
<feature type="strand" evidence="4">
    <location>
        <begin position="524"/>
        <end position="526"/>
    </location>
</feature>
<feature type="helix" evidence="4">
    <location>
        <begin position="527"/>
        <end position="529"/>
    </location>
</feature>
<feature type="helix" evidence="4">
    <location>
        <begin position="532"/>
        <end position="542"/>
    </location>
</feature>
<feature type="strand" evidence="4">
    <location>
        <begin position="548"/>
        <end position="550"/>
    </location>
</feature>
<feature type="strand" evidence="4">
    <location>
        <begin position="555"/>
        <end position="557"/>
    </location>
</feature>
<feature type="helix" evidence="4">
    <location>
        <begin position="561"/>
        <end position="568"/>
    </location>
</feature>
<feature type="strand" evidence="4">
    <location>
        <begin position="571"/>
        <end position="573"/>
    </location>
</feature>
<feature type="strand" evidence="4">
    <location>
        <begin position="578"/>
        <end position="583"/>
    </location>
</feature>
<feature type="strand" evidence="4">
    <location>
        <begin position="585"/>
        <end position="592"/>
    </location>
</feature>
<feature type="strand" evidence="4">
    <location>
        <begin position="605"/>
        <end position="608"/>
    </location>
</feature>
<feature type="strand" evidence="4">
    <location>
        <begin position="612"/>
        <end position="614"/>
    </location>
</feature>
<feature type="strand" evidence="4">
    <location>
        <begin position="638"/>
        <end position="641"/>
    </location>
</feature>
<feature type="strand" evidence="3">
    <location>
        <begin position="643"/>
        <end position="645"/>
    </location>
</feature>
<feature type="strand" evidence="3">
    <location>
        <begin position="647"/>
        <end position="650"/>
    </location>
</feature>
<feature type="strand" evidence="4">
    <location>
        <begin position="653"/>
        <end position="660"/>
    </location>
</feature>
<feature type="strand" evidence="4">
    <location>
        <begin position="668"/>
        <end position="676"/>
    </location>
</feature>
<feature type="helix" evidence="4">
    <location>
        <begin position="677"/>
        <end position="680"/>
    </location>
</feature>
<feature type="turn" evidence="3">
    <location>
        <begin position="681"/>
        <end position="684"/>
    </location>
</feature>
<feature type="strand" evidence="4">
    <location>
        <begin position="686"/>
        <end position="699"/>
    </location>
</feature>
<feature type="strand" evidence="4">
    <location>
        <begin position="718"/>
        <end position="721"/>
    </location>
</feature>
<feature type="strand" evidence="4">
    <location>
        <begin position="725"/>
        <end position="727"/>
    </location>
</feature>
<feature type="strand" evidence="4">
    <location>
        <begin position="738"/>
        <end position="740"/>
    </location>
</feature>
<feature type="strand" evidence="4">
    <location>
        <begin position="742"/>
        <end position="744"/>
    </location>
</feature>
<feature type="helix" evidence="4">
    <location>
        <begin position="753"/>
        <end position="761"/>
    </location>
</feature>
<feature type="strand" evidence="3">
    <location>
        <begin position="768"/>
        <end position="771"/>
    </location>
</feature>
<feature type="strand" evidence="4">
    <location>
        <begin position="782"/>
        <end position="786"/>
    </location>
</feature>
<feature type="strand" evidence="4">
    <location>
        <begin position="789"/>
        <end position="791"/>
    </location>
</feature>
<feature type="helix" evidence="4">
    <location>
        <begin position="792"/>
        <end position="794"/>
    </location>
</feature>
<feature type="strand" evidence="4">
    <location>
        <begin position="802"/>
        <end position="814"/>
    </location>
</feature>
<feature type="strand" evidence="4">
    <location>
        <begin position="821"/>
        <end position="823"/>
    </location>
</feature>
<feature type="strand" evidence="3">
    <location>
        <begin position="825"/>
        <end position="827"/>
    </location>
</feature>
<feature type="strand" evidence="4">
    <location>
        <begin position="829"/>
        <end position="836"/>
    </location>
</feature>
<feature type="turn" evidence="4">
    <location>
        <begin position="838"/>
        <end position="840"/>
    </location>
</feature>
<feature type="strand" evidence="4">
    <location>
        <begin position="851"/>
        <end position="854"/>
    </location>
</feature>
<feature type="helix" evidence="4">
    <location>
        <begin position="858"/>
        <end position="862"/>
    </location>
</feature>
<feature type="helix" evidence="4">
    <location>
        <begin position="866"/>
        <end position="880"/>
    </location>
</feature>
<feature type="helix" evidence="4">
    <location>
        <begin position="890"/>
        <end position="893"/>
    </location>
</feature>
<feature type="helix" evidence="4">
    <location>
        <begin position="897"/>
        <end position="910"/>
    </location>
</feature>
<feature type="strand" evidence="4">
    <location>
        <begin position="912"/>
        <end position="914"/>
    </location>
</feature>
<feature type="strand" evidence="4">
    <location>
        <begin position="921"/>
        <end position="923"/>
    </location>
</feature>
<feature type="turn" evidence="4">
    <location>
        <begin position="932"/>
        <end position="934"/>
    </location>
</feature>
<feature type="strand" evidence="4">
    <location>
        <begin position="942"/>
        <end position="953"/>
    </location>
</feature>
<feature type="helix" evidence="4">
    <location>
        <begin position="956"/>
        <end position="958"/>
    </location>
</feature>
<feature type="strand" evidence="4">
    <location>
        <begin position="961"/>
        <end position="965"/>
    </location>
</feature>
<feature type="strand" evidence="4">
    <location>
        <begin position="970"/>
        <end position="972"/>
    </location>
</feature>
<feature type="turn" evidence="4">
    <location>
        <begin position="979"/>
        <end position="982"/>
    </location>
</feature>
<feature type="helix" evidence="4">
    <location>
        <begin position="989"/>
        <end position="997"/>
    </location>
</feature>
<feature type="helix" evidence="4">
    <location>
        <begin position="1001"/>
        <end position="1008"/>
    </location>
</feature>
<feature type="turn" evidence="4">
    <location>
        <begin position="1009"/>
        <end position="1011"/>
    </location>
</feature>
<feature type="helix" evidence="4">
    <location>
        <begin position="1015"/>
        <end position="1026"/>
    </location>
</feature>
<feature type="helix" evidence="4">
    <location>
        <begin position="1038"/>
        <end position="1049"/>
    </location>
</feature>
<feature type="strand" evidence="4">
    <location>
        <begin position="1055"/>
        <end position="1059"/>
    </location>
</feature>
<feature type="strand" evidence="4">
    <location>
        <begin position="1064"/>
        <end position="1066"/>
    </location>
</feature>
<reference key="1">
    <citation type="journal article" date="1996" name="DNA Res.">
        <title>Sequence analysis of the genome of the unicellular cyanobacterium Synechocystis sp. strain PCC6803. II. Sequence determination of the entire genome and assignment of potential protein-coding regions.</title>
        <authorList>
            <person name="Kaneko T."/>
            <person name="Sato S."/>
            <person name="Kotani H."/>
            <person name="Tanaka A."/>
            <person name="Asamizu E."/>
            <person name="Nakamura Y."/>
            <person name="Miyajima N."/>
            <person name="Hirosawa M."/>
            <person name="Sugiura M."/>
            <person name="Sasamoto S."/>
            <person name="Kimura T."/>
            <person name="Hosouchi T."/>
            <person name="Matsuno A."/>
            <person name="Muraki A."/>
            <person name="Nakazaki N."/>
            <person name="Naruo K."/>
            <person name="Okumura S."/>
            <person name="Shimpo S."/>
            <person name="Takeuchi C."/>
            <person name="Wada T."/>
            <person name="Watanabe A."/>
            <person name="Yamada M."/>
            <person name="Yasuda M."/>
            <person name="Tabata S."/>
        </authorList>
    </citation>
    <scope>NUCLEOTIDE SEQUENCE [LARGE SCALE GENOMIC DNA]</scope>
    <source>
        <strain>ATCC 27184 / PCC 6803 / Kazusa</strain>
    </source>
</reference>
<gene>
    <name evidence="1" type="primary">rpoB</name>
    <name type="ordered locus">sll1787</name>
</gene>
<accession>P77965</accession>
<keyword id="KW-0002">3D-structure</keyword>
<keyword id="KW-0240">DNA-directed RNA polymerase</keyword>
<keyword id="KW-0548">Nucleotidyltransferase</keyword>
<keyword id="KW-1185">Reference proteome</keyword>
<keyword id="KW-0804">Transcription</keyword>
<keyword id="KW-0808">Transferase</keyword>
<evidence type="ECO:0000255" key="1">
    <source>
        <dbReference type="HAMAP-Rule" id="MF_01321"/>
    </source>
</evidence>
<evidence type="ECO:0000256" key="2">
    <source>
        <dbReference type="SAM" id="MobiDB-lite"/>
    </source>
</evidence>
<evidence type="ECO:0007829" key="3">
    <source>
        <dbReference type="PDB" id="8GZG"/>
    </source>
</evidence>
<evidence type="ECO:0007829" key="4">
    <source>
        <dbReference type="PDB" id="8GZH"/>
    </source>
</evidence>
<sequence>MTNLATTMLPDLIEIQHASFHWFLEEGLIEELNSFSPISDYTGKLELHFLGKDYKLKQPKYDVDESKRRDASYSVQMYVPTRLINKETGEIKEQEVFIGDLPLMTERGTFIINGAERVIVNQIVRSPGVYYKKELDKNGRRTYSASLIPNRGAWLKFETDKNGLVYVRIDKTRKLSAQVLLKAIGLSDNEILDSLSHPEFYQKTLDKEGNPTEEEALVELYKKLRPGEPPTVSGGQQLLESRFFDPKRYDLGRVGRYKLNKKLRLNEADTTRVLTPQDILAAINYLINLEFDVGTTDDIDHLGNRRVRSVGELLQNQIRVGLNRLERIIRERMTVSESDALTPASLVNPKPLVAAIKEFFGSSQLSQFMDQTNPLAELTHKRRISALGPGGLTRERAGFAVRDIHPSHHGRICPVETPEGPNAGLIGSLATCARVNDYGFIETPYFRVESGRVRKDLDPVYLTADEEDDMRVAPGDIPTDEEGNIIGESVPIRYRQEFSTTSPEQVDYVAVSPVQIISVATSMIPFLEHDDANRALMGSNMQRQAVPLLRPERPLVGTGLEAQAARDSGMVIVSRTHGIVTYVDATEIRVQPHSPDNPAEKGEEIVYPIQKYQRSNQDTCLNQRPLVYAGEDVVPGQVLADGSATEGGELALGQNILVAYMPWEGYNYEDAILISERLVYDDVYTSIHIEKFEIEARQTKLGPEEITREIPNVGEDALRNLDEHGIIRIGAWVESGDILVGKVTPKGEADQPPEEKLLRAIFGEKARDVRDNSLRVPNGEKGRVVDVRVFTREKGDELPPGANMVVRIYVAQKRKIQVGDKMAGRHGNKGIISRILPIEDMPYLPDGRPIDIALNPLGVPSRMNVGQVFECLLGWAGENLGVRFKITPFDEMYGEEASRDTVHGLLEEASQRPNKDWVFNENHPGKIQVFDGRTGEPFDRPITVGQAYMLKLVHLVDDKIHARSTGPYSLVTQQPLGGKAQQGGQRFGEMEVWALEAYGAAYILQELLTVKSDDMQGRNEALNAIVKGKSIPRPGTPESFKVLMRELQSLGLDIAAHKVQLSEDGESADAEVDLMIDSQRRAPNRPTYESLHTEEDLEEEEV</sequence>
<proteinExistence type="evidence at protein level"/>
<comment type="function">
    <text evidence="1">DNA-dependent RNA polymerase catalyzes the transcription of DNA into RNA using the four ribonucleoside triphosphates as substrates.</text>
</comment>
<comment type="catalytic activity">
    <reaction evidence="1">
        <text>RNA(n) + a ribonucleoside 5'-triphosphate = RNA(n+1) + diphosphate</text>
        <dbReference type="Rhea" id="RHEA:21248"/>
        <dbReference type="Rhea" id="RHEA-COMP:14527"/>
        <dbReference type="Rhea" id="RHEA-COMP:17342"/>
        <dbReference type="ChEBI" id="CHEBI:33019"/>
        <dbReference type="ChEBI" id="CHEBI:61557"/>
        <dbReference type="ChEBI" id="CHEBI:140395"/>
        <dbReference type="EC" id="2.7.7.6"/>
    </reaction>
</comment>
<comment type="subunit">
    <text evidence="1">In cyanobacteria the RNAP catalytic core is composed of 2 alpha, 1 beta, 1 beta', 1 gamma and 1 omega subunit. When a sigma factor is associated with the core the holoenzyme is formed, which can initiate transcription.</text>
</comment>
<comment type="similarity">
    <text evidence="1">Belongs to the RNA polymerase beta chain family.</text>
</comment>
<dbReference type="EC" id="2.7.7.6" evidence="1"/>
<dbReference type="EMBL" id="BA000022">
    <property type="protein sequence ID" value="BAA17365.1"/>
    <property type="molecule type" value="Genomic_DNA"/>
</dbReference>
<dbReference type="PIR" id="S77518">
    <property type="entry name" value="S77518"/>
</dbReference>
<dbReference type="PDB" id="8GZG">
    <property type="method" value="EM"/>
    <property type="resolution" value="3.13 A"/>
    <property type="chains" value="C=1-1102"/>
</dbReference>
<dbReference type="PDB" id="8GZH">
    <property type="method" value="EM"/>
    <property type="resolution" value="2.96 A"/>
    <property type="chains" value="C=1-1102"/>
</dbReference>
<dbReference type="PDBsum" id="8GZG"/>
<dbReference type="PDBsum" id="8GZH"/>
<dbReference type="EMDB" id="EMD-34397"/>
<dbReference type="EMDB" id="EMD-34398"/>
<dbReference type="SMR" id="P77965"/>
<dbReference type="DIP" id="DIP-37767N"/>
<dbReference type="FunCoup" id="P77965">
    <property type="interactions" value="430"/>
</dbReference>
<dbReference type="IntAct" id="P77965">
    <property type="interactions" value="10"/>
</dbReference>
<dbReference type="STRING" id="1148.gene:10498228"/>
<dbReference type="PaxDb" id="1148-1652443"/>
<dbReference type="EnsemblBacteria" id="BAA17365">
    <property type="protein sequence ID" value="BAA17365"/>
    <property type="gene ID" value="BAA17365"/>
</dbReference>
<dbReference type="KEGG" id="syn:sll1787"/>
<dbReference type="eggNOG" id="COG0085">
    <property type="taxonomic scope" value="Bacteria"/>
</dbReference>
<dbReference type="InParanoid" id="P77965"/>
<dbReference type="PhylomeDB" id="P77965"/>
<dbReference type="Proteomes" id="UP000001425">
    <property type="component" value="Chromosome"/>
</dbReference>
<dbReference type="GO" id="GO:0000428">
    <property type="term" value="C:DNA-directed RNA polymerase complex"/>
    <property type="evidence" value="ECO:0007669"/>
    <property type="project" value="UniProtKB-KW"/>
</dbReference>
<dbReference type="GO" id="GO:0003677">
    <property type="term" value="F:DNA binding"/>
    <property type="evidence" value="ECO:0007669"/>
    <property type="project" value="UniProtKB-UniRule"/>
</dbReference>
<dbReference type="GO" id="GO:0003899">
    <property type="term" value="F:DNA-directed RNA polymerase activity"/>
    <property type="evidence" value="ECO:0007669"/>
    <property type="project" value="UniProtKB-UniRule"/>
</dbReference>
<dbReference type="GO" id="GO:0032549">
    <property type="term" value="F:ribonucleoside binding"/>
    <property type="evidence" value="ECO:0007669"/>
    <property type="project" value="InterPro"/>
</dbReference>
<dbReference type="GO" id="GO:0006351">
    <property type="term" value="P:DNA-templated transcription"/>
    <property type="evidence" value="ECO:0007669"/>
    <property type="project" value="UniProtKB-UniRule"/>
</dbReference>
<dbReference type="CDD" id="cd00653">
    <property type="entry name" value="RNA_pol_B_RPB2"/>
    <property type="match status" value="1"/>
</dbReference>
<dbReference type="FunFam" id="3.90.1800.10:FF:000001">
    <property type="entry name" value="DNA-directed RNA polymerase subunit beta"/>
    <property type="match status" value="1"/>
</dbReference>
<dbReference type="Gene3D" id="2.40.50.100">
    <property type="match status" value="1"/>
</dbReference>
<dbReference type="Gene3D" id="2.40.50.150">
    <property type="match status" value="1"/>
</dbReference>
<dbReference type="Gene3D" id="3.90.1100.10">
    <property type="match status" value="1"/>
</dbReference>
<dbReference type="Gene3D" id="2.30.150.10">
    <property type="entry name" value="DNA-directed RNA polymerase, beta subunit, external 1 domain"/>
    <property type="match status" value="1"/>
</dbReference>
<dbReference type="Gene3D" id="2.40.270.10">
    <property type="entry name" value="DNA-directed RNA polymerase, subunit 2, domain 6"/>
    <property type="match status" value="1"/>
</dbReference>
<dbReference type="Gene3D" id="3.90.1800.10">
    <property type="entry name" value="RNA polymerase alpha subunit dimerisation domain"/>
    <property type="match status" value="1"/>
</dbReference>
<dbReference type="Gene3D" id="3.90.1110.10">
    <property type="entry name" value="RNA polymerase Rpb2, domain 2"/>
    <property type="match status" value="1"/>
</dbReference>
<dbReference type="HAMAP" id="MF_01321">
    <property type="entry name" value="RNApol_bact_RpoB"/>
    <property type="match status" value="1"/>
</dbReference>
<dbReference type="InterPro" id="IPR042107">
    <property type="entry name" value="DNA-dir_RNA_pol_bsu_ext_1_sf"/>
</dbReference>
<dbReference type="InterPro" id="IPR019462">
    <property type="entry name" value="DNA-dir_RNA_pol_bsu_external_1"/>
</dbReference>
<dbReference type="InterPro" id="IPR015712">
    <property type="entry name" value="DNA-dir_RNA_pol_su2"/>
</dbReference>
<dbReference type="InterPro" id="IPR007120">
    <property type="entry name" value="DNA-dir_RNAP_su2_dom"/>
</dbReference>
<dbReference type="InterPro" id="IPR037033">
    <property type="entry name" value="DNA-dir_RNAP_su2_hyb_sf"/>
</dbReference>
<dbReference type="InterPro" id="IPR010243">
    <property type="entry name" value="RNA_pol_bsu_bac"/>
</dbReference>
<dbReference type="InterPro" id="IPR007121">
    <property type="entry name" value="RNA_pol_bsu_CS"/>
</dbReference>
<dbReference type="InterPro" id="IPR007644">
    <property type="entry name" value="RNA_pol_bsu_protrusion"/>
</dbReference>
<dbReference type="InterPro" id="IPR007642">
    <property type="entry name" value="RNA_pol_Rpb2_2"/>
</dbReference>
<dbReference type="InterPro" id="IPR037034">
    <property type="entry name" value="RNA_pol_Rpb2_2_sf"/>
</dbReference>
<dbReference type="InterPro" id="IPR007645">
    <property type="entry name" value="RNA_pol_Rpb2_3"/>
</dbReference>
<dbReference type="InterPro" id="IPR007641">
    <property type="entry name" value="RNA_pol_Rpb2_7"/>
</dbReference>
<dbReference type="InterPro" id="IPR014724">
    <property type="entry name" value="RNA_pol_RPB2_OB-fold"/>
</dbReference>
<dbReference type="NCBIfam" id="NF001616">
    <property type="entry name" value="PRK00405.1"/>
    <property type="match status" value="1"/>
</dbReference>
<dbReference type="NCBIfam" id="TIGR02013">
    <property type="entry name" value="rpoB"/>
    <property type="match status" value="1"/>
</dbReference>
<dbReference type="PANTHER" id="PTHR20856">
    <property type="entry name" value="DNA-DIRECTED RNA POLYMERASE I SUBUNIT 2"/>
    <property type="match status" value="1"/>
</dbReference>
<dbReference type="Pfam" id="PF04563">
    <property type="entry name" value="RNA_pol_Rpb2_1"/>
    <property type="match status" value="1"/>
</dbReference>
<dbReference type="Pfam" id="PF04561">
    <property type="entry name" value="RNA_pol_Rpb2_2"/>
    <property type="match status" value="1"/>
</dbReference>
<dbReference type="Pfam" id="PF04565">
    <property type="entry name" value="RNA_pol_Rpb2_3"/>
    <property type="match status" value="1"/>
</dbReference>
<dbReference type="Pfam" id="PF10385">
    <property type="entry name" value="RNA_pol_Rpb2_45"/>
    <property type="match status" value="1"/>
</dbReference>
<dbReference type="Pfam" id="PF00562">
    <property type="entry name" value="RNA_pol_Rpb2_6"/>
    <property type="match status" value="1"/>
</dbReference>
<dbReference type="Pfam" id="PF04560">
    <property type="entry name" value="RNA_pol_Rpb2_7"/>
    <property type="match status" value="1"/>
</dbReference>
<dbReference type="SUPFAM" id="SSF64484">
    <property type="entry name" value="beta and beta-prime subunits of DNA dependent RNA-polymerase"/>
    <property type="match status" value="1"/>
</dbReference>
<dbReference type="PROSITE" id="PS01166">
    <property type="entry name" value="RNA_POL_BETA"/>
    <property type="match status" value="1"/>
</dbReference>
<protein>
    <recommendedName>
        <fullName evidence="1">DNA-directed RNA polymerase subunit beta</fullName>
        <shortName evidence="1">RNAP subunit beta</shortName>
        <ecNumber evidence="1">2.7.7.6</ecNumber>
    </recommendedName>
    <alternativeName>
        <fullName evidence="1">RNA polymerase subunit beta</fullName>
    </alternativeName>
    <alternativeName>
        <fullName evidence="1">Transcriptase subunit beta</fullName>
    </alternativeName>
</protein>